<evidence type="ECO:0000255" key="1">
    <source>
        <dbReference type="HAMAP-Rule" id="MF_01574"/>
    </source>
</evidence>
<organism>
    <name type="scientific">Streptococcus pneumoniae (strain ATCC BAA-255 / R6)</name>
    <dbReference type="NCBI Taxonomy" id="171101"/>
    <lineage>
        <taxon>Bacteria</taxon>
        <taxon>Bacillati</taxon>
        <taxon>Bacillota</taxon>
        <taxon>Bacilli</taxon>
        <taxon>Lactobacillales</taxon>
        <taxon>Streptococcaceae</taxon>
        <taxon>Streptococcus</taxon>
    </lineage>
</organism>
<proteinExistence type="inferred from homology"/>
<keyword id="KW-0326">Glycosidase</keyword>
<keyword id="KW-0378">Hydrolase</keyword>
<keyword id="KW-1185">Reference proteome</keyword>
<reference key="1">
    <citation type="journal article" date="2001" name="J. Bacteriol.">
        <title>Genome of the bacterium Streptococcus pneumoniae strain R6.</title>
        <authorList>
            <person name="Hoskins J."/>
            <person name="Alborn W.E. Jr."/>
            <person name="Arnold J."/>
            <person name="Blaszczak L.C."/>
            <person name="Burgett S."/>
            <person name="DeHoff B.S."/>
            <person name="Estrem S.T."/>
            <person name="Fritz L."/>
            <person name="Fu D.-J."/>
            <person name="Fuller W."/>
            <person name="Geringer C."/>
            <person name="Gilmour R."/>
            <person name="Glass J.S."/>
            <person name="Khoja H."/>
            <person name="Kraft A.R."/>
            <person name="Lagace R.E."/>
            <person name="LeBlanc D.J."/>
            <person name="Lee L.N."/>
            <person name="Lefkowitz E.J."/>
            <person name="Lu J."/>
            <person name="Matsushima P."/>
            <person name="McAhren S.M."/>
            <person name="McHenney M."/>
            <person name="McLeaster K."/>
            <person name="Mundy C.W."/>
            <person name="Nicas T.I."/>
            <person name="Norris F.H."/>
            <person name="O'Gara M."/>
            <person name="Peery R.B."/>
            <person name="Robertson G.T."/>
            <person name="Rockey P."/>
            <person name="Sun P.-M."/>
            <person name="Winkler M.E."/>
            <person name="Yang Y."/>
            <person name="Young-Bellido M."/>
            <person name="Zhao G."/>
            <person name="Zook C.A."/>
            <person name="Baltz R.H."/>
            <person name="Jaskunas S.R."/>
            <person name="Rosteck P.R. Jr."/>
            <person name="Skatrud P.L."/>
            <person name="Glass J.I."/>
        </authorList>
    </citation>
    <scope>NUCLEOTIDE SEQUENCE [LARGE SCALE GENOMIC DNA]</scope>
    <source>
        <strain>ATCC BAA-255 / R6</strain>
    </source>
</reference>
<protein>
    <recommendedName>
        <fullName evidence="1">6-phospho-beta-galactosidase 2</fullName>
        <ecNumber evidence="1">3.2.1.85</ecNumber>
    </recommendedName>
    <alternativeName>
        <fullName evidence="1">Beta-D-phosphogalactoside galactohydrolase 2</fullName>
        <shortName evidence="1">PGALase 2</shortName>
    </alternativeName>
    <alternativeName>
        <fullName evidence="1">P-beta-Gal 2</fullName>
        <shortName evidence="1">PBG 2</shortName>
    </alternativeName>
</protein>
<accession>Q8DPP6</accession>
<gene>
    <name evidence="1" type="primary">lacG2</name>
    <name type="ordered locus">spr1069</name>
</gene>
<name>LACG2_STRR6</name>
<sequence length="468" mass="53927">MTKTLPKDFIFGGATAAYQAEGATHTDGKGPVAWDKYLEDNYWYTAEPASDFYNRYPVDLKLAEEYGVNGIRISIAWSRIFPTGYGQVNAKGVEFYHNLFAECHKRHVEPFVTLHHFDTPEALHSNGDFLNRENIEHFVDYAAFCFEEFPEVNYWTTFNEIGPIGDGQYLVGKFPPGIQYDLAKVFQSHHNMMVSHARAVKLYKDKGYKGEIGVVHALPTKYPLDHENPADVRAAELEDIIHNKFILDATYLGRYSAETMEGVNHILSVNGGSLDLREEDFTALEAAKDLNDFLGINYYMSDWMEAFDGETEIIHNGKGKKGSSKYQIKGVGRRVAPDYVPRTDWDWIIYPQGLYDQIMRVKKDYPNYKKIYITENGLGYKDEFVDNTVYDDGRIDYVKQHLEILSDAIADGANVKGYFIWSLMDVFSWSNGYEKRYGLFYVDFETQERYPKKSAHWYKKVAETQIID</sequence>
<comment type="catalytic activity">
    <reaction evidence="1">
        <text>a 6-phospho-beta-D-galactoside + H2O = D-galactose 6-phosphate + an alcohol</text>
        <dbReference type="Rhea" id="RHEA:24568"/>
        <dbReference type="ChEBI" id="CHEBI:15377"/>
        <dbReference type="ChEBI" id="CHEBI:30879"/>
        <dbReference type="ChEBI" id="CHEBI:58534"/>
        <dbReference type="ChEBI" id="CHEBI:91004"/>
        <dbReference type="EC" id="3.2.1.85"/>
    </reaction>
</comment>
<comment type="pathway">
    <text evidence="1">Carbohydrate metabolism; lactose degradation; D-galactose 6-phosphate and beta-D-glucose from lactose 6-phosphate: step 1/1.</text>
</comment>
<comment type="similarity">
    <text evidence="1">Belongs to the glycosyl hydrolase 1 family.</text>
</comment>
<dbReference type="EC" id="3.2.1.85" evidence="1"/>
<dbReference type="EMBL" id="AE007317">
    <property type="protein sequence ID" value="AAK99872.1"/>
    <property type="molecule type" value="Genomic_DNA"/>
</dbReference>
<dbReference type="PIR" id="D98005">
    <property type="entry name" value="D98005"/>
</dbReference>
<dbReference type="RefSeq" id="NP_358662.1">
    <property type="nucleotide sequence ID" value="NC_003098.1"/>
</dbReference>
<dbReference type="RefSeq" id="WP_000169251.1">
    <property type="nucleotide sequence ID" value="NC_003098.1"/>
</dbReference>
<dbReference type="SMR" id="Q8DPP6"/>
<dbReference type="STRING" id="171101.spr1069"/>
<dbReference type="CAZy" id="GH1">
    <property type="family name" value="Glycoside Hydrolase Family 1"/>
</dbReference>
<dbReference type="KEGG" id="spr:spr1069"/>
<dbReference type="PATRIC" id="fig|171101.6.peg.1161"/>
<dbReference type="eggNOG" id="COG2723">
    <property type="taxonomic scope" value="Bacteria"/>
</dbReference>
<dbReference type="HOGENOM" id="CLU_001859_1_3_9"/>
<dbReference type="UniPathway" id="UPA00542">
    <property type="reaction ID" value="UER00605"/>
</dbReference>
<dbReference type="Proteomes" id="UP000000586">
    <property type="component" value="Chromosome"/>
</dbReference>
<dbReference type="GO" id="GO:0005829">
    <property type="term" value="C:cytosol"/>
    <property type="evidence" value="ECO:0000318"/>
    <property type="project" value="GO_Central"/>
</dbReference>
<dbReference type="GO" id="GO:0033920">
    <property type="term" value="F:6-phospho-beta-galactosidase activity"/>
    <property type="evidence" value="ECO:0007669"/>
    <property type="project" value="UniProtKB-UniRule"/>
</dbReference>
<dbReference type="GO" id="GO:0008422">
    <property type="term" value="F:beta-glucosidase activity"/>
    <property type="evidence" value="ECO:0000318"/>
    <property type="project" value="GO_Central"/>
</dbReference>
<dbReference type="GO" id="GO:0016052">
    <property type="term" value="P:carbohydrate catabolic process"/>
    <property type="evidence" value="ECO:0000318"/>
    <property type="project" value="GO_Central"/>
</dbReference>
<dbReference type="GO" id="GO:0019512">
    <property type="term" value="P:lactose catabolic process via tagatose-6-phosphate"/>
    <property type="evidence" value="ECO:0007669"/>
    <property type="project" value="InterPro"/>
</dbReference>
<dbReference type="FunFam" id="3.20.20.80:FF:000004">
    <property type="entry name" value="Beta-glucosidase 6-phospho-beta-glucosidase"/>
    <property type="match status" value="1"/>
</dbReference>
<dbReference type="Gene3D" id="3.20.20.80">
    <property type="entry name" value="Glycosidases"/>
    <property type="match status" value="1"/>
</dbReference>
<dbReference type="HAMAP" id="MF_01574">
    <property type="entry name" value="LacG"/>
    <property type="match status" value="1"/>
</dbReference>
<dbReference type="InterPro" id="IPR005928">
    <property type="entry name" value="6P-beta-galactosidase"/>
</dbReference>
<dbReference type="InterPro" id="IPR001360">
    <property type="entry name" value="Glyco_hydro_1"/>
</dbReference>
<dbReference type="InterPro" id="IPR018120">
    <property type="entry name" value="Glyco_hydro_1_AS"/>
</dbReference>
<dbReference type="InterPro" id="IPR033132">
    <property type="entry name" value="Glyco_hydro_1_N_CS"/>
</dbReference>
<dbReference type="InterPro" id="IPR017853">
    <property type="entry name" value="Glycoside_hydrolase_SF"/>
</dbReference>
<dbReference type="NCBIfam" id="TIGR01233">
    <property type="entry name" value="lacG"/>
    <property type="match status" value="1"/>
</dbReference>
<dbReference type="NCBIfam" id="NF010036">
    <property type="entry name" value="PRK13511.1"/>
    <property type="match status" value="1"/>
</dbReference>
<dbReference type="PANTHER" id="PTHR10353">
    <property type="entry name" value="GLYCOSYL HYDROLASE"/>
    <property type="match status" value="1"/>
</dbReference>
<dbReference type="PANTHER" id="PTHR10353:SF36">
    <property type="entry name" value="LP05116P"/>
    <property type="match status" value="1"/>
</dbReference>
<dbReference type="Pfam" id="PF00232">
    <property type="entry name" value="Glyco_hydro_1"/>
    <property type="match status" value="1"/>
</dbReference>
<dbReference type="PRINTS" id="PR00131">
    <property type="entry name" value="GLHYDRLASE1"/>
</dbReference>
<dbReference type="SUPFAM" id="SSF51445">
    <property type="entry name" value="(Trans)glycosidases"/>
    <property type="match status" value="1"/>
</dbReference>
<dbReference type="PROSITE" id="PS00572">
    <property type="entry name" value="GLYCOSYL_HYDROL_F1_1"/>
    <property type="match status" value="1"/>
</dbReference>
<dbReference type="PROSITE" id="PS00653">
    <property type="entry name" value="GLYCOSYL_HYDROL_F1_2"/>
    <property type="match status" value="1"/>
</dbReference>
<feature type="chain" id="PRO_0000260733" description="6-phospho-beta-galactosidase 2">
    <location>
        <begin position="1"/>
        <end position="468"/>
    </location>
</feature>
<feature type="active site" description="Proton donor" evidence="1">
    <location>
        <position position="160"/>
    </location>
</feature>
<feature type="active site" description="Nucleophile" evidence="1">
    <location>
        <position position="375"/>
    </location>
</feature>
<feature type="binding site" evidence="1">
    <location>
        <position position="19"/>
    </location>
    <ligand>
        <name>D-galactose 6-phosphate</name>
        <dbReference type="ChEBI" id="CHEBI:91004"/>
    </ligand>
</feature>
<feature type="binding site" evidence="1">
    <location>
        <position position="116"/>
    </location>
    <ligand>
        <name>D-galactose 6-phosphate</name>
        <dbReference type="ChEBI" id="CHEBI:91004"/>
    </ligand>
</feature>
<feature type="binding site" evidence="1">
    <location>
        <position position="159"/>
    </location>
    <ligand>
        <name>D-galactose 6-phosphate</name>
        <dbReference type="ChEBI" id="CHEBI:91004"/>
    </ligand>
</feature>
<feature type="binding site" evidence="1">
    <location>
        <position position="160"/>
    </location>
    <ligand>
        <name>D-galactose 6-phosphate</name>
        <dbReference type="ChEBI" id="CHEBI:91004"/>
    </ligand>
</feature>
<feature type="binding site" evidence="1">
    <location>
        <position position="297"/>
    </location>
    <ligand>
        <name>D-galactose 6-phosphate</name>
        <dbReference type="ChEBI" id="CHEBI:91004"/>
    </ligand>
</feature>
<feature type="binding site" evidence="1">
    <location>
        <position position="428"/>
    </location>
    <ligand>
        <name>D-galactose 6-phosphate</name>
        <dbReference type="ChEBI" id="CHEBI:91004"/>
    </ligand>
</feature>
<feature type="binding site" evidence="1">
    <location>
        <position position="429"/>
    </location>
    <ligand>
        <name>D-galactose 6-phosphate</name>
        <dbReference type="ChEBI" id="CHEBI:91004"/>
    </ligand>
</feature>
<feature type="binding site" evidence="1">
    <location>
        <position position="435"/>
    </location>
    <ligand>
        <name>D-galactose 6-phosphate</name>
        <dbReference type="ChEBI" id="CHEBI:91004"/>
    </ligand>
</feature>
<feature type="binding site" evidence="1">
    <location>
        <position position="437"/>
    </location>
    <ligand>
        <name>D-galactose 6-phosphate</name>
        <dbReference type="ChEBI" id="CHEBI:91004"/>
    </ligand>
</feature>